<evidence type="ECO:0000255" key="1">
    <source>
        <dbReference type="HAMAP-Rule" id="MF_00558"/>
    </source>
</evidence>
<dbReference type="EC" id="6.2.1.5" evidence="1"/>
<dbReference type="EMBL" id="CP000462">
    <property type="protein sequence ID" value="ABK39302.1"/>
    <property type="molecule type" value="Genomic_DNA"/>
</dbReference>
<dbReference type="RefSeq" id="WP_011705801.1">
    <property type="nucleotide sequence ID" value="NC_008570.1"/>
</dbReference>
<dbReference type="RefSeq" id="YP_856460.1">
    <property type="nucleotide sequence ID" value="NC_008570.1"/>
</dbReference>
<dbReference type="SMR" id="A0KJK9"/>
<dbReference type="STRING" id="380703.AHA_1929"/>
<dbReference type="EnsemblBacteria" id="ABK39302">
    <property type="protein sequence ID" value="ABK39302"/>
    <property type="gene ID" value="AHA_1929"/>
</dbReference>
<dbReference type="GeneID" id="4488643"/>
<dbReference type="KEGG" id="aha:AHA_1929"/>
<dbReference type="PATRIC" id="fig|380703.7.peg.1944"/>
<dbReference type="eggNOG" id="COG0045">
    <property type="taxonomic scope" value="Bacteria"/>
</dbReference>
<dbReference type="HOGENOM" id="CLU_037430_0_2_6"/>
<dbReference type="OrthoDB" id="9802602at2"/>
<dbReference type="UniPathway" id="UPA00223">
    <property type="reaction ID" value="UER00999"/>
</dbReference>
<dbReference type="Proteomes" id="UP000000756">
    <property type="component" value="Chromosome"/>
</dbReference>
<dbReference type="GO" id="GO:0005829">
    <property type="term" value="C:cytosol"/>
    <property type="evidence" value="ECO:0007669"/>
    <property type="project" value="TreeGrafter"/>
</dbReference>
<dbReference type="GO" id="GO:0042709">
    <property type="term" value="C:succinate-CoA ligase complex"/>
    <property type="evidence" value="ECO:0007669"/>
    <property type="project" value="TreeGrafter"/>
</dbReference>
<dbReference type="GO" id="GO:0005524">
    <property type="term" value="F:ATP binding"/>
    <property type="evidence" value="ECO:0007669"/>
    <property type="project" value="UniProtKB-UniRule"/>
</dbReference>
<dbReference type="GO" id="GO:0000287">
    <property type="term" value="F:magnesium ion binding"/>
    <property type="evidence" value="ECO:0007669"/>
    <property type="project" value="UniProtKB-UniRule"/>
</dbReference>
<dbReference type="GO" id="GO:0004775">
    <property type="term" value="F:succinate-CoA ligase (ADP-forming) activity"/>
    <property type="evidence" value="ECO:0007669"/>
    <property type="project" value="UniProtKB-UniRule"/>
</dbReference>
<dbReference type="GO" id="GO:0004776">
    <property type="term" value="F:succinate-CoA ligase (GDP-forming) activity"/>
    <property type="evidence" value="ECO:0007669"/>
    <property type="project" value="RHEA"/>
</dbReference>
<dbReference type="GO" id="GO:0006104">
    <property type="term" value="P:succinyl-CoA metabolic process"/>
    <property type="evidence" value="ECO:0007669"/>
    <property type="project" value="TreeGrafter"/>
</dbReference>
<dbReference type="GO" id="GO:0006099">
    <property type="term" value="P:tricarboxylic acid cycle"/>
    <property type="evidence" value="ECO:0007669"/>
    <property type="project" value="UniProtKB-UniRule"/>
</dbReference>
<dbReference type="FunFam" id="3.30.1490.20:FF:000002">
    <property type="entry name" value="Succinate--CoA ligase [ADP-forming] subunit beta"/>
    <property type="match status" value="1"/>
</dbReference>
<dbReference type="FunFam" id="3.30.470.20:FF:000002">
    <property type="entry name" value="Succinate--CoA ligase [ADP-forming] subunit beta"/>
    <property type="match status" value="1"/>
</dbReference>
<dbReference type="FunFam" id="3.40.50.261:FF:000001">
    <property type="entry name" value="Succinate--CoA ligase [ADP-forming] subunit beta"/>
    <property type="match status" value="1"/>
</dbReference>
<dbReference type="Gene3D" id="3.30.1490.20">
    <property type="entry name" value="ATP-grasp fold, A domain"/>
    <property type="match status" value="1"/>
</dbReference>
<dbReference type="Gene3D" id="3.30.470.20">
    <property type="entry name" value="ATP-grasp fold, B domain"/>
    <property type="match status" value="1"/>
</dbReference>
<dbReference type="Gene3D" id="3.40.50.261">
    <property type="entry name" value="Succinyl-CoA synthetase domains"/>
    <property type="match status" value="1"/>
</dbReference>
<dbReference type="HAMAP" id="MF_00558">
    <property type="entry name" value="Succ_CoA_beta"/>
    <property type="match status" value="1"/>
</dbReference>
<dbReference type="InterPro" id="IPR011761">
    <property type="entry name" value="ATP-grasp"/>
</dbReference>
<dbReference type="InterPro" id="IPR013650">
    <property type="entry name" value="ATP-grasp_succ-CoA_synth-type"/>
</dbReference>
<dbReference type="InterPro" id="IPR013815">
    <property type="entry name" value="ATP_grasp_subdomain_1"/>
</dbReference>
<dbReference type="InterPro" id="IPR017866">
    <property type="entry name" value="Succ-CoA_synthase_bsu_CS"/>
</dbReference>
<dbReference type="InterPro" id="IPR005811">
    <property type="entry name" value="SUCC_ACL_C"/>
</dbReference>
<dbReference type="InterPro" id="IPR005809">
    <property type="entry name" value="Succ_CoA_ligase-like_bsu"/>
</dbReference>
<dbReference type="InterPro" id="IPR016102">
    <property type="entry name" value="Succinyl-CoA_synth-like"/>
</dbReference>
<dbReference type="NCBIfam" id="NF001913">
    <property type="entry name" value="PRK00696.1"/>
    <property type="match status" value="1"/>
</dbReference>
<dbReference type="NCBIfam" id="TIGR01016">
    <property type="entry name" value="sucCoAbeta"/>
    <property type="match status" value="1"/>
</dbReference>
<dbReference type="PANTHER" id="PTHR11815:SF10">
    <property type="entry name" value="SUCCINATE--COA LIGASE [GDP-FORMING] SUBUNIT BETA, MITOCHONDRIAL"/>
    <property type="match status" value="1"/>
</dbReference>
<dbReference type="PANTHER" id="PTHR11815">
    <property type="entry name" value="SUCCINYL-COA SYNTHETASE BETA CHAIN"/>
    <property type="match status" value="1"/>
</dbReference>
<dbReference type="Pfam" id="PF08442">
    <property type="entry name" value="ATP-grasp_2"/>
    <property type="match status" value="1"/>
</dbReference>
<dbReference type="Pfam" id="PF00549">
    <property type="entry name" value="Ligase_CoA"/>
    <property type="match status" value="1"/>
</dbReference>
<dbReference type="PIRSF" id="PIRSF001554">
    <property type="entry name" value="SucCS_beta"/>
    <property type="match status" value="1"/>
</dbReference>
<dbReference type="SUPFAM" id="SSF56059">
    <property type="entry name" value="Glutathione synthetase ATP-binding domain-like"/>
    <property type="match status" value="1"/>
</dbReference>
<dbReference type="SUPFAM" id="SSF52210">
    <property type="entry name" value="Succinyl-CoA synthetase domains"/>
    <property type="match status" value="1"/>
</dbReference>
<dbReference type="PROSITE" id="PS50975">
    <property type="entry name" value="ATP_GRASP"/>
    <property type="match status" value="1"/>
</dbReference>
<dbReference type="PROSITE" id="PS01217">
    <property type="entry name" value="SUCCINYL_COA_LIG_3"/>
    <property type="match status" value="1"/>
</dbReference>
<gene>
    <name evidence="1" type="primary">sucC</name>
    <name type="ordered locus">AHA_1929</name>
</gene>
<accession>A0KJK9</accession>
<name>SUCC_AERHH</name>
<protein>
    <recommendedName>
        <fullName evidence="1">Succinate--CoA ligase [ADP-forming] subunit beta</fullName>
        <ecNumber evidence="1">6.2.1.5</ecNumber>
    </recommendedName>
    <alternativeName>
        <fullName evidence="1">Succinyl-CoA synthetase subunit beta</fullName>
        <shortName evidence="1">SCS-beta</shortName>
    </alternativeName>
</protein>
<organism>
    <name type="scientific">Aeromonas hydrophila subsp. hydrophila (strain ATCC 7966 / DSM 30187 / BCRC 13018 / CCUG 14551 / JCM 1027 / KCTC 2358 / NCIMB 9240 / NCTC 8049)</name>
    <dbReference type="NCBI Taxonomy" id="380703"/>
    <lineage>
        <taxon>Bacteria</taxon>
        <taxon>Pseudomonadati</taxon>
        <taxon>Pseudomonadota</taxon>
        <taxon>Gammaproteobacteria</taxon>
        <taxon>Aeromonadales</taxon>
        <taxon>Aeromonadaceae</taxon>
        <taxon>Aeromonas</taxon>
    </lineage>
</organism>
<sequence>MNLHEYQAKQLFAEYGLPVSEGYACATPQEAAEAADKIGGNTWVVKCQVHAGGRGKAGGVKLAKSKDEIRAFAQNWLGKNLVTYQTDANGQPVTKILVESCTDIAKELYLGAVVDRGSRRVVFMASTEGGVEIEKVAHETPELIHKAALDPLVGPQPYQARELAFKLGLVGEQIKQFTKIFMGLGQMFLDCDFALLEINPLVITAQGNLHCLDGKINIDANALYRQPKLRQMHDPSQDDPREAHAAQWELNYVALDGNIGCMVNGAGLAMGTMDIVNLHGGSPANFLDVGGGATKERVTEAFKIILSDSKVQAVLVNIFGGIVRCDMIAEGIIGAVKEVGVKVPVVVRLEGNNAELGARKLADSGLNIIAATSLTDAAQQVVKAAEAK</sequence>
<feature type="chain" id="PRO_1000081992" description="Succinate--CoA ligase [ADP-forming] subunit beta">
    <location>
        <begin position="1"/>
        <end position="388"/>
    </location>
</feature>
<feature type="domain" description="ATP-grasp" evidence="1">
    <location>
        <begin position="9"/>
        <end position="244"/>
    </location>
</feature>
<feature type="binding site" evidence="1">
    <location>
        <position position="46"/>
    </location>
    <ligand>
        <name>ATP</name>
        <dbReference type="ChEBI" id="CHEBI:30616"/>
    </ligand>
</feature>
<feature type="binding site" evidence="1">
    <location>
        <begin position="53"/>
        <end position="55"/>
    </location>
    <ligand>
        <name>ATP</name>
        <dbReference type="ChEBI" id="CHEBI:30616"/>
    </ligand>
</feature>
<feature type="binding site" evidence="1">
    <location>
        <position position="99"/>
    </location>
    <ligand>
        <name>ATP</name>
        <dbReference type="ChEBI" id="CHEBI:30616"/>
    </ligand>
</feature>
<feature type="binding site" evidence="1">
    <location>
        <position position="102"/>
    </location>
    <ligand>
        <name>ATP</name>
        <dbReference type="ChEBI" id="CHEBI:30616"/>
    </ligand>
</feature>
<feature type="binding site" evidence="1">
    <location>
        <position position="107"/>
    </location>
    <ligand>
        <name>ATP</name>
        <dbReference type="ChEBI" id="CHEBI:30616"/>
    </ligand>
</feature>
<feature type="binding site" evidence="1">
    <location>
        <position position="199"/>
    </location>
    <ligand>
        <name>Mg(2+)</name>
        <dbReference type="ChEBI" id="CHEBI:18420"/>
    </ligand>
</feature>
<feature type="binding site" evidence="1">
    <location>
        <position position="213"/>
    </location>
    <ligand>
        <name>Mg(2+)</name>
        <dbReference type="ChEBI" id="CHEBI:18420"/>
    </ligand>
</feature>
<feature type="binding site" evidence="1">
    <location>
        <position position="264"/>
    </location>
    <ligand>
        <name>substrate</name>
        <note>ligand shared with subunit alpha</note>
    </ligand>
</feature>
<feature type="binding site" evidence="1">
    <location>
        <begin position="321"/>
        <end position="323"/>
    </location>
    <ligand>
        <name>substrate</name>
        <note>ligand shared with subunit alpha</note>
    </ligand>
</feature>
<keyword id="KW-0067">ATP-binding</keyword>
<keyword id="KW-0436">Ligase</keyword>
<keyword id="KW-0460">Magnesium</keyword>
<keyword id="KW-0479">Metal-binding</keyword>
<keyword id="KW-0547">Nucleotide-binding</keyword>
<keyword id="KW-1185">Reference proteome</keyword>
<keyword id="KW-0816">Tricarboxylic acid cycle</keyword>
<proteinExistence type="inferred from homology"/>
<reference key="1">
    <citation type="journal article" date="2006" name="J. Bacteriol.">
        <title>Genome sequence of Aeromonas hydrophila ATCC 7966T: jack of all trades.</title>
        <authorList>
            <person name="Seshadri R."/>
            <person name="Joseph S.W."/>
            <person name="Chopra A.K."/>
            <person name="Sha J."/>
            <person name="Shaw J."/>
            <person name="Graf J."/>
            <person name="Haft D.H."/>
            <person name="Wu M."/>
            <person name="Ren Q."/>
            <person name="Rosovitz M.J."/>
            <person name="Madupu R."/>
            <person name="Tallon L."/>
            <person name="Kim M."/>
            <person name="Jin S."/>
            <person name="Vuong H."/>
            <person name="Stine O.C."/>
            <person name="Ali A."/>
            <person name="Horneman A.J."/>
            <person name="Heidelberg J.F."/>
        </authorList>
    </citation>
    <scope>NUCLEOTIDE SEQUENCE [LARGE SCALE GENOMIC DNA]</scope>
    <source>
        <strain>ATCC 7966 / DSM 30187 / BCRC 13018 / CCUG 14551 / JCM 1027 / KCTC 2358 / NCIMB 9240 / NCTC 8049</strain>
    </source>
</reference>
<comment type="function">
    <text evidence="1">Succinyl-CoA synthetase functions in the citric acid cycle (TCA), coupling the hydrolysis of succinyl-CoA to the synthesis of either ATP or GTP and thus represents the only step of substrate-level phosphorylation in the TCA. The beta subunit provides nucleotide specificity of the enzyme and binds the substrate succinate, while the binding sites for coenzyme A and phosphate are found in the alpha subunit.</text>
</comment>
<comment type="catalytic activity">
    <reaction evidence="1">
        <text>succinate + ATP + CoA = succinyl-CoA + ADP + phosphate</text>
        <dbReference type="Rhea" id="RHEA:17661"/>
        <dbReference type="ChEBI" id="CHEBI:30031"/>
        <dbReference type="ChEBI" id="CHEBI:30616"/>
        <dbReference type="ChEBI" id="CHEBI:43474"/>
        <dbReference type="ChEBI" id="CHEBI:57287"/>
        <dbReference type="ChEBI" id="CHEBI:57292"/>
        <dbReference type="ChEBI" id="CHEBI:456216"/>
        <dbReference type="EC" id="6.2.1.5"/>
    </reaction>
    <physiologicalReaction direction="right-to-left" evidence="1">
        <dbReference type="Rhea" id="RHEA:17663"/>
    </physiologicalReaction>
</comment>
<comment type="catalytic activity">
    <reaction evidence="1">
        <text>GTP + succinate + CoA = succinyl-CoA + GDP + phosphate</text>
        <dbReference type="Rhea" id="RHEA:22120"/>
        <dbReference type="ChEBI" id="CHEBI:30031"/>
        <dbReference type="ChEBI" id="CHEBI:37565"/>
        <dbReference type="ChEBI" id="CHEBI:43474"/>
        <dbReference type="ChEBI" id="CHEBI:57287"/>
        <dbReference type="ChEBI" id="CHEBI:57292"/>
        <dbReference type="ChEBI" id="CHEBI:58189"/>
    </reaction>
    <physiologicalReaction direction="right-to-left" evidence="1">
        <dbReference type="Rhea" id="RHEA:22122"/>
    </physiologicalReaction>
</comment>
<comment type="cofactor">
    <cofactor evidence="1">
        <name>Mg(2+)</name>
        <dbReference type="ChEBI" id="CHEBI:18420"/>
    </cofactor>
    <text evidence="1">Binds 1 Mg(2+) ion per subunit.</text>
</comment>
<comment type="pathway">
    <text evidence="1">Carbohydrate metabolism; tricarboxylic acid cycle; succinate from succinyl-CoA (ligase route): step 1/1.</text>
</comment>
<comment type="subunit">
    <text evidence="1">Heterotetramer of two alpha and two beta subunits.</text>
</comment>
<comment type="similarity">
    <text evidence="1">Belongs to the succinate/malate CoA ligase beta subunit family.</text>
</comment>